<organism>
    <name type="scientific">Burkholderia cenocepacia (strain HI2424)</name>
    <dbReference type="NCBI Taxonomy" id="331272"/>
    <lineage>
        <taxon>Bacteria</taxon>
        <taxon>Pseudomonadati</taxon>
        <taxon>Pseudomonadota</taxon>
        <taxon>Betaproteobacteria</taxon>
        <taxon>Burkholderiales</taxon>
        <taxon>Burkholderiaceae</taxon>
        <taxon>Burkholderia</taxon>
        <taxon>Burkholderia cepacia complex</taxon>
    </lineage>
</organism>
<feature type="chain" id="PRO_1000007433" description="Large ribosomal subunit protein uL29">
    <location>
        <begin position="1"/>
        <end position="64"/>
    </location>
</feature>
<gene>
    <name evidence="1" type="primary">rpmC</name>
    <name type="ordered locus">Bcen2424_0356</name>
</gene>
<comment type="similarity">
    <text evidence="1">Belongs to the universal ribosomal protein uL29 family.</text>
</comment>
<evidence type="ECO:0000255" key="1">
    <source>
        <dbReference type="HAMAP-Rule" id="MF_00374"/>
    </source>
</evidence>
<evidence type="ECO:0000305" key="2"/>
<dbReference type="EMBL" id="CP000458">
    <property type="protein sequence ID" value="ABK07110.1"/>
    <property type="molecule type" value="Genomic_DNA"/>
</dbReference>
<dbReference type="RefSeq" id="WP_006400652.1">
    <property type="nucleotide sequence ID" value="NC_008542.1"/>
</dbReference>
<dbReference type="SMR" id="A0K3N3"/>
<dbReference type="GeneID" id="98107152"/>
<dbReference type="KEGG" id="bch:Bcen2424_0356"/>
<dbReference type="HOGENOM" id="CLU_158491_1_1_4"/>
<dbReference type="GO" id="GO:0022625">
    <property type="term" value="C:cytosolic large ribosomal subunit"/>
    <property type="evidence" value="ECO:0007669"/>
    <property type="project" value="TreeGrafter"/>
</dbReference>
<dbReference type="GO" id="GO:0003735">
    <property type="term" value="F:structural constituent of ribosome"/>
    <property type="evidence" value="ECO:0007669"/>
    <property type="project" value="InterPro"/>
</dbReference>
<dbReference type="GO" id="GO:0006412">
    <property type="term" value="P:translation"/>
    <property type="evidence" value="ECO:0007669"/>
    <property type="project" value="UniProtKB-UniRule"/>
</dbReference>
<dbReference type="CDD" id="cd00427">
    <property type="entry name" value="Ribosomal_L29_HIP"/>
    <property type="match status" value="1"/>
</dbReference>
<dbReference type="FunFam" id="1.10.287.310:FF:000001">
    <property type="entry name" value="50S ribosomal protein L29"/>
    <property type="match status" value="1"/>
</dbReference>
<dbReference type="Gene3D" id="6.10.140.1970">
    <property type="match status" value="1"/>
</dbReference>
<dbReference type="HAMAP" id="MF_00374">
    <property type="entry name" value="Ribosomal_uL29"/>
    <property type="match status" value="1"/>
</dbReference>
<dbReference type="InterPro" id="IPR050063">
    <property type="entry name" value="Ribosomal_protein_uL29"/>
</dbReference>
<dbReference type="InterPro" id="IPR001854">
    <property type="entry name" value="Ribosomal_uL29"/>
</dbReference>
<dbReference type="InterPro" id="IPR018254">
    <property type="entry name" value="Ribosomal_uL29_CS"/>
</dbReference>
<dbReference type="InterPro" id="IPR036049">
    <property type="entry name" value="Ribosomal_uL29_sf"/>
</dbReference>
<dbReference type="NCBIfam" id="TIGR00012">
    <property type="entry name" value="L29"/>
    <property type="match status" value="1"/>
</dbReference>
<dbReference type="PANTHER" id="PTHR10916">
    <property type="entry name" value="60S RIBOSOMAL PROTEIN L35/50S RIBOSOMAL PROTEIN L29"/>
    <property type="match status" value="1"/>
</dbReference>
<dbReference type="PANTHER" id="PTHR10916:SF0">
    <property type="entry name" value="LARGE RIBOSOMAL SUBUNIT PROTEIN UL29C"/>
    <property type="match status" value="1"/>
</dbReference>
<dbReference type="Pfam" id="PF00831">
    <property type="entry name" value="Ribosomal_L29"/>
    <property type="match status" value="1"/>
</dbReference>
<dbReference type="SUPFAM" id="SSF46561">
    <property type="entry name" value="Ribosomal protein L29 (L29p)"/>
    <property type="match status" value="1"/>
</dbReference>
<dbReference type="PROSITE" id="PS00579">
    <property type="entry name" value="RIBOSOMAL_L29"/>
    <property type="match status" value="1"/>
</dbReference>
<reference key="1">
    <citation type="submission" date="2006-08" db="EMBL/GenBank/DDBJ databases">
        <title>Complete sequence of chromosome 1 of Burkholderia cenocepacia HI2424.</title>
        <authorList>
            <person name="Copeland A."/>
            <person name="Lucas S."/>
            <person name="Lapidus A."/>
            <person name="Barry K."/>
            <person name="Detter J.C."/>
            <person name="Glavina del Rio T."/>
            <person name="Hammon N."/>
            <person name="Israni S."/>
            <person name="Pitluck S."/>
            <person name="Chain P."/>
            <person name="Malfatti S."/>
            <person name="Shin M."/>
            <person name="Vergez L."/>
            <person name="Schmutz J."/>
            <person name="Larimer F."/>
            <person name="Land M."/>
            <person name="Hauser L."/>
            <person name="Kyrpides N."/>
            <person name="Kim E."/>
            <person name="LiPuma J.J."/>
            <person name="Gonzalez C.F."/>
            <person name="Konstantinidis K."/>
            <person name="Tiedje J.M."/>
            <person name="Richardson P."/>
        </authorList>
    </citation>
    <scope>NUCLEOTIDE SEQUENCE [LARGE SCALE GENOMIC DNA]</scope>
    <source>
        <strain>HI2424</strain>
    </source>
</reference>
<sequence length="64" mass="7312">MKASELLQKDQAALNKELADLLKAQFGLRMQLATQQLTNTSQLKKVRRDIARVRTVMTQKANQK</sequence>
<name>RL29_BURCH</name>
<protein>
    <recommendedName>
        <fullName evidence="1">Large ribosomal subunit protein uL29</fullName>
    </recommendedName>
    <alternativeName>
        <fullName evidence="2">50S ribosomal protein L29</fullName>
    </alternativeName>
</protein>
<keyword id="KW-0687">Ribonucleoprotein</keyword>
<keyword id="KW-0689">Ribosomal protein</keyword>
<accession>A0K3N3</accession>
<proteinExistence type="inferred from homology"/>